<comment type="function">
    <text evidence="1">Involved in DNA repair and RecF pathway recombination.</text>
</comment>
<comment type="similarity">
    <text evidence="1">Belongs to the RecO family.</text>
</comment>
<dbReference type="EMBL" id="CP000524">
    <property type="protein sequence ID" value="ABM44724.1"/>
    <property type="molecule type" value="Genomic_DNA"/>
</dbReference>
<dbReference type="RefSeq" id="WP_005766549.1">
    <property type="nucleotide sequence ID" value="NC_008783.1"/>
</dbReference>
<dbReference type="SMR" id="A1US38"/>
<dbReference type="STRING" id="360095.BARBAKC583_0475"/>
<dbReference type="GeneID" id="4684405"/>
<dbReference type="KEGG" id="bbk:BARBAKC583_0475"/>
<dbReference type="PATRIC" id="fig|360095.6.peg.457"/>
<dbReference type="eggNOG" id="COG1381">
    <property type="taxonomic scope" value="Bacteria"/>
</dbReference>
<dbReference type="HOGENOM" id="CLU_086029_0_0_5"/>
<dbReference type="OrthoDB" id="9804792at2"/>
<dbReference type="Proteomes" id="UP000000643">
    <property type="component" value="Chromosome"/>
</dbReference>
<dbReference type="GO" id="GO:0043590">
    <property type="term" value="C:bacterial nucleoid"/>
    <property type="evidence" value="ECO:0007669"/>
    <property type="project" value="TreeGrafter"/>
</dbReference>
<dbReference type="GO" id="GO:0006310">
    <property type="term" value="P:DNA recombination"/>
    <property type="evidence" value="ECO:0007669"/>
    <property type="project" value="UniProtKB-UniRule"/>
</dbReference>
<dbReference type="GO" id="GO:0006302">
    <property type="term" value="P:double-strand break repair"/>
    <property type="evidence" value="ECO:0007669"/>
    <property type="project" value="TreeGrafter"/>
</dbReference>
<dbReference type="Gene3D" id="2.40.50.140">
    <property type="entry name" value="Nucleic acid-binding proteins"/>
    <property type="match status" value="1"/>
</dbReference>
<dbReference type="Gene3D" id="1.20.1440.120">
    <property type="entry name" value="Recombination protein O, C-terminal domain"/>
    <property type="match status" value="1"/>
</dbReference>
<dbReference type="HAMAP" id="MF_00201">
    <property type="entry name" value="RecO"/>
    <property type="match status" value="1"/>
</dbReference>
<dbReference type="InterPro" id="IPR037278">
    <property type="entry name" value="ARFGAP/RecO"/>
</dbReference>
<dbReference type="InterPro" id="IPR022572">
    <property type="entry name" value="DNA_rep/recomb_RecO_N"/>
</dbReference>
<dbReference type="InterPro" id="IPR012340">
    <property type="entry name" value="NA-bd_OB-fold"/>
</dbReference>
<dbReference type="InterPro" id="IPR003717">
    <property type="entry name" value="RecO"/>
</dbReference>
<dbReference type="InterPro" id="IPR042242">
    <property type="entry name" value="RecO_C"/>
</dbReference>
<dbReference type="NCBIfam" id="TIGR00613">
    <property type="entry name" value="reco"/>
    <property type="match status" value="1"/>
</dbReference>
<dbReference type="PANTHER" id="PTHR33991">
    <property type="entry name" value="DNA REPAIR PROTEIN RECO"/>
    <property type="match status" value="1"/>
</dbReference>
<dbReference type="PANTHER" id="PTHR33991:SF1">
    <property type="entry name" value="DNA REPAIR PROTEIN RECO"/>
    <property type="match status" value="1"/>
</dbReference>
<dbReference type="Pfam" id="PF02565">
    <property type="entry name" value="RecO_C"/>
    <property type="match status" value="1"/>
</dbReference>
<dbReference type="Pfam" id="PF11967">
    <property type="entry name" value="RecO_N"/>
    <property type="match status" value="1"/>
</dbReference>
<dbReference type="SUPFAM" id="SSF57863">
    <property type="entry name" value="ArfGap/RecO-like zinc finger"/>
    <property type="match status" value="1"/>
</dbReference>
<dbReference type="SUPFAM" id="SSF50249">
    <property type="entry name" value="Nucleic acid-binding proteins"/>
    <property type="match status" value="1"/>
</dbReference>
<feature type="chain" id="PRO_1000012121" description="DNA repair protein RecO">
    <location>
        <begin position="1"/>
        <end position="245"/>
    </location>
</feature>
<accession>A1US38</accession>
<sequence>MKWKEQAIILGARQYGETSVILEVVTRQHGRYMGVVKGGRSRRMAALLQPGNFVEAEWWARLDEHLGLFKLEALDLCASRLMFLPEALYGLQLMASHFRLLPERDPHPILYDILHLFMQNFDEQFVNAELLVRFEMRLLEELGFGLDLSHCAVTGRQEKLYYVSPKSGRAVCEEVGLPWKNKLLLLPKFLIERTNRPVDFDDIRNGFTLTDFFLTRHVWEPRGIKQPSVRAILIQLFERRFHTKA</sequence>
<keyword id="KW-0227">DNA damage</keyword>
<keyword id="KW-0233">DNA recombination</keyword>
<keyword id="KW-0234">DNA repair</keyword>
<gene>
    <name evidence="1" type="primary">recO</name>
    <name type="ordered locus">BARBAKC583_0475</name>
</gene>
<reference key="1">
    <citation type="submission" date="2006-12" db="EMBL/GenBank/DDBJ databases">
        <authorList>
            <person name="Hendrix L."/>
            <person name="Mohamoud Y."/>
            <person name="Radune D."/>
            <person name="Shvartsbeyn A."/>
            <person name="Daugherty S."/>
            <person name="Dodson R."/>
            <person name="Durkin A.S."/>
            <person name="Harkins D."/>
            <person name="Huot H."/>
            <person name="Kothari S.P."/>
            <person name="Madupu R."/>
            <person name="Li J."/>
            <person name="Nelson W.C."/>
            <person name="Shrivastava S."/>
            <person name="Giglio M.G."/>
            <person name="Haft D."/>
            <person name="Selengut J."/>
            <person name="Fraser-Ligget C."/>
            <person name="Seshadri R."/>
        </authorList>
    </citation>
    <scope>NUCLEOTIDE SEQUENCE [LARGE SCALE GENOMIC DNA]</scope>
    <source>
        <strain>ATCC 35685 / KC583 / Herrer 020/F12,63</strain>
    </source>
</reference>
<protein>
    <recommendedName>
        <fullName evidence="1">DNA repair protein RecO</fullName>
    </recommendedName>
    <alternativeName>
        <fullName evidence="1">Recombination protein O</fullName>
    </alternativeName>
</protein>
<organism>
    <name type="scientific">Bartonella bacilliformis (strain ATCC 35685 / KC583 / Herrer 020/F12,63)</name>
    <dbReference type="NCBI Taxonomy" id="360095"/>
    <lineage>
        <taxon>Bacteria</taxon>
        <taxon>Pseudomonadati</taxon>
        <taxon>Pseudomonadota</taxon>
        <taxon>Alphaproteobacteria</taxon>
        <taxon>Hyphomicrobiales</taxon>
        <taxon>Bartonellaceae</taxon>
        <taxon>Bartonella</taxon>
    </lineage>
</organism>
<proteinExistence type="inferred from homology"/>
<evidence type="ECO:0000255" key="1">
    <source>
        <dbReference type="HAMAP-Rule" id="MF_00201"/>
    </source>
</evidence>
<name>RECO_BARBK</name>